<protein>
    <recommendedName>
        <fullName>Calcium-binding allergen Ole e 8</fullName>
    </recommendedName>
    <alternativeName>
        <fullName>PCA18/PCA23</fullName>
    </alternativeName>
    <allergenName>Ole e 8</allergenName>
</protein>
<organism>
    <name type="scientific">Olea europaea</name>
    <name type="common">Common olive</name>
    <dbReference type="NCBI Taxonomy" id="4146"/>
    <lineage>
        <taxon>Eukaryota</taxon>
        <taxon>Viridiplantae</taxon>
        <taxon>Streptophyta</taxon>
        <taxon>Embryophyta</taxon>
        <taxon>Tracheophyta</taxon>
        <taxon>Spermatophyta</taxon>
        <taxon>Magnoliopsida</taxon>
        <taxon>eudicotyledons</taxon>
        <taxon>Gunneridae</taxon>
        <taxon>Pentapetalae</taxon>
        <taxon>asterids</taxon>
        <taxon>lamiids</taxon>
        <taxon>Lamiales</taxon>
        <taxon>Oleaceae</taxon>
        <taxon>Oleeae</taxon>
        <taxon>Olea</taxon>
    </lineage>
</organism>
<feature type="chain" id="PRO_0000073651" description="Calcium-binding allergen Ole e 8">
    <location>
        <begin position="1"/>
        <end position="171"/>
    </location>
</feature>
<feature type="domain" description="EF-hand 1" evidence="1">
    <location>
        <begin position="16"/>
        <end position="51"/>
    </location>
</feature>
<feature type="domain" description="EF-hand 2" evidence="1">
    <location>
        <begin position="52"/>
        <end position="87"/>
    </location>
</feature>
<feature type="domain" description="EF-hand 3" evidence="1">
    <location>
        <begin position="92"/>
        <end position="127"/>
    </location>
</feature>
<feature type="domain" description="EF-hand 4" evidence="1">
    <location>
        <begin position="128"/>
        <end position="163"/>
    </location>
</feature>
<feature type="binding site" evidence="1">
    <location>
        <position position="29"/>
    </location>
    <ligand>
        <name>Ca(2+)</name>
        <dbReference type="ChEBI" id="CHEBI:29108"/>
        <label>1</label>
    </ligand>
</feature>
<feature type="binding site" evidence="1">
    <location>
        <position position="31"/>
    </location>
    <ligand>
        <name>Ca(2+)</name>
        <dbReference type="ChEBI" id="CHEBI:29108"/>
        <label>1</label>
    </ligand>
</feature>
<feature type="binding site" evidence="1">
    <location>
        <position position="33"/>
    </location>
    <ligand>
        <name>Ca(2+)</name>
        <dbReference type="ChEBI" id="CHEBI:29108"/>
        <label>1</label>
    </ligand>
</feature>
<feature type="binding site" evidence="1">
    <location>
        <position position="35"/>
    </location>
    <ligand>
        <name>Ca(2+)</name>
        <dbReference type="ChEBI" id="CHEBI:29108"/>
        <label>1</label>
    </ligand>
</feature>
<feature type="binding site" evidence="1">
    <location>
        <position position="40"/>
    </location>
    <ligand>
        <name>Ca(2+)</name>
        <dbReference type="ChEBI" id="CHEBI:29108"/>
        <label>1</label>
    </ligand>
</feature>
<feature type="binding site" evidence="1">
    <location>
        <position position="65"/>
    </location>
    <ligand>
        <name>Ca(2+)</name>
        <dbReference type="ChEBI" id="CHEBI:29108"/>
        <label>2</label>
    </ligand>
</feature>
<feature type="binding site" evidence="1">
    <location>
        <position position="67"/>
    </location>
    <ligand>
        <name>Ca(2+)</name>
        <dbReference type="ChEBI" id="CHEBI:29108"/>
        <label>2</label>
    </ligand>
</feature>
<feature type="binding site" evidence="1">
    <location>
        <position position="69"/>
    </location>
    <ligand>
        <name>Ca(2+)</name>
        <dbReference type="ChEBI" id="CHEBI:29108"/>
        <label>2</label>
    </ligand>
</feature>
<feature type="binding site" evidence="1">
    <location>
        <position position="76"/>
    </location>
    <ligand>
        <name>Ca(2+)</name>
        <dbReference type="ChEBI" id="CHEBI:29108"/>
        <label>2</label>
    </ligand>
</feature>
<feature type="binding site" evidence="1">
    <location>
        <position position="105"/>
    </location>
    <ligand>
        <name>Ca(2+)</name>
        <dbReference type="ChEBI" id="CHEBI:29108"/>
        <label>3</label>
    </ligand>
</feature>
<feature type="binding site" evidence="1">
    <location>
        <position position="107"/>
    </location>
    <ligand>
        <name>Ca(2+)</name>
        <dbReference type="ChEBI" id="CHEBI:29108"/>
        <label>3</label>
    </ligand>
</feature>
<feature type="binding site" evidence="1">
    <location>
        <position position="109"/>
    </location>
    <ligand>
        <name>Ca(2+)</name>
        <dbReference type="ChEBI" id="CHEBI:29108"/>
        <label>3</label>
    </ligand>
</feature>
<feature type="binding site" evidence="1">
    <location>
        <position position="116"/>
    </location>
    <ligand>
        <name>Ca(2+)</name>
        <dbReference type="ChEBI" id="CHEBI:29108"/>
        <label>3</label>
    </ligand>
</feature>
<feature type="binding site" evidence="1">
    <location>
        <position position="141"/>
    </location>
    <ligand>
        <name>Ca(2+)</name>
        <dbReference type="ChEBI" id="CHEBI:29108"/>
        <label>4</label>
    </ligand>
</feature>
<feature type="binding site" evidence="1">
    <location>
        <position position="143"/>
    </location>
    <ligand>
        <name>Ca(2+)</name>
        <dbReference type="ChEBI" id="CHEBI:29108"/>
        <label>4</label>
    </ligand>
</feature>
<feature type="binding site" evidence="1">
    <location>
        <position position="145"/>
    </location>
    <ligand>
        <name>Ca(2+)</name>
        <dbReference type="ChEBI" id="CHEBI:29108"/>
        <label>4</label>
    </ligand>
</feature>
<feature type="binding site" evidence="1">
    <location>
        <position position="147"/>
    </location>
    <ligand>
        <name>Ca(2+)</name>
        <dbReference type="ChEBI" id="CHEBI:29108"/>
        <label>4</label>
    </ligand>
</feature>
<feature type="binding site" evidence="1">
    <location>
        <position position="152"/>
    </location>
    <ligand>
        <name>Ca(2+)</name>
        <dbReference type="ChEBI" id="CHEBI:29108"/>
        <label>4</label>
    </ligand>
</feature>
<feature type="sequence variant" evidence="2">
    <original>GV</original>
    <variation>CA</variation>
    <location>
        <begin position="43"/>
        <end position="44"/>
    </location>
</feature>
<feature type="sequence variant" evidence="2">
    <original>G</original>
    <variation>A</variation>
    <location>
        <position position="58"/>
    </location>
</feature>
<feature type="sequence variant" evidence="2">
    <original>I</original>
    <variation>M</variation>
    <location>
        <position position="60"/>
    </location>
</feature>
<comment type="subunit">
    <text evidence="2">Homodimer.</text>
</comment>
<comment type="tissue specificity">
    <text evidence="2">Expressed in pollen.</text>
</comment>
<comment type="polymorphism">
    <text evidence="3">Several isoforms of the allergen exist due to polymorphism.</text>
</comment>
<comment type="allergen">
    <text>Causes an allergic reaction in human.</text>
</comment>
<name>ALL8_OLEEU</name>
<sequence>MAANTDRNSKPSVYLQEPNEVQGVFNRFDANGDGKISGDELAGVLKALGSNTSKEEIGRIMEEIDTDKDGFINVQEFAAFVKAETDPYPSSGGENELKEAFELYDQDHNGLISSVELHKILTRLGERYAEHDCVEMIKSVDSDGDGYVSFEEFKKMMTNKSGNNSQAEPPK</sequence>
<evidence type="ECO:0000255" key="1">
    <source>
        <dbReference type="PROSITE-ProRule" id="PRU00448"/>
    </source>
</evidence>
<evidence type="ECO:0000269" key="2">
    <source>
    </source>
</evidence>
<evidence type="ECO:0000305" key="3">
    <source>
    </source>
</evidence>
<reference key="1">
    <citation type="journal article" date="2000" name="FEBS Lett.">
        <title>Cloning, expression and characterization of a novel four EF-hand Ca(2+)-binding protein from olive pollen with allergenic activity.</title>
        <authorList>
            <person name="Ledesma A."/>
            <person name="Villalba M."/>
            <person name="Rodriguez R."/>
        </authorList>
    </citation>
    <scope>NUCLEOTIDE SEQUENCE [MRNA]</scope>
    <scope>VARIANTS</scope>
    <scope>TISSUE SPECIFICITY</scope>
    <scope>SUBUNIT</scope>
    <source>
        <tissue>Pollen</tissue>
    </source>
</reference>
<reference key="2">
    <citation type="journal article" date="2012" name="Talanta">
        <title>Analysis of olive allergens.</title>
        <authorList>
            <person name="Esteve C."/>
            <person name="Montealegre C."/>
            <person name="Marina M.L."/>
            <person name="Garcia M.C."/>
        </authorList>
    </citation>
    <scope>REVIEW</scope>
    <scope>NOMENCLATURE</scope>
</reference>
<proteinExistence type="evidence at protein level"/>
<accession>Q9M7R0</accession>
<accession>Q9M7Q9</accession>
<dbReference type="EMBL" id="AF078679">
    <property type="protein sequence ID" value="AAF31151.1"/>
    <property type="molecule type" value="mRNA"/>
</dbReference>
<dbReference type="EMBL" id="AF078680">
    <property type="protein sequence ID" value="AAF31152.1"/>
    <property type="molecule type" value="mRNA"/>
</dbReference>
<dbReference type="SMR" id="Q9M7R0"/>
<dbReference type="Allergome" id="3389">
    <property type="allergen name" value="Ole e 8.0101"/>
</dbReference>
<dbReference type="Allergome" id="496">
    <property type="allergen name" value="Ole e 8"/>
</dbReference>
<dbReference type="GO" id="GO:0005509">
    <property type="term" value="F:calcium ion binding"/>
    <property type="evidence" value="ECO:0007669"/>
    <property type="project" value="InterPro"/>
</dbReference>
<dbReference type="CDD" id="cd00051">
    <property type="entry name" value="EFh"/>
    <property type="match status" value="2"/>
</dbReference>
<dbReference type="FunFam" id="1.10.238.10:FF:000001">
    <property type="entry name" value="Calmodulin 1"/>
    <property type="match status" value="1"/>
</dbReference>
<dbReference type="Gene3D" id="1.10.238.10">
    <property type="entry name" value="EF-hand"/>
    <property type="match status" value="2"/>
</dbReference>
<dbReference type="InterPro" id="IPR011992">
    <property type="entry name" value="EF-hand-dom_pair"/>
</dbReference>
<dbReference type="InterPro" id="IPR018247">
    <property type="entry name" value="EF_Hand_1_Ca_BS"/>
</dbReference>
<dbReference type="InterPro" id="IPR002048">
    <property type="entry name" value="EF_hand_dom"/>
</dbReference>
<dbReference type="InterPro" id="IPR039647">
    <property type="entry name" value="EF_hand_pair_protein_CML-like"/>
</dbReference>
<dbReference type="PANTHER" id="PTHR10891">
    <property type="entry name" value="EF-HAND CALCIUM-BINDING DOMAIN CONTAINING PROTEIN"/>
    <property type="match status" value="1"/>
</dbReference>
<dbReference type="Pfam" id="PF13499">
    <property type="entry name" value="EF-hand_7"/>
    <property type="match status" value="2"/>
</dbReference>
<dbReference type="SMART" id="SM00054">
    <property type="entry name" value="EFh"/>
    <property type="match status" value="4"/>
</dbReference>
<dbReference type="SUPFAM" id="SSF47473">
    <property type="entry name" value="EF-hand"/>
    <property type="match status" value="1"/>
</dbReference>
<dbReference type="PROSITE" id="PS00018">
    <property type="entry name" value="EF_HAND_1"/>
    <property type="match status" value="4"/>
</dbReference>
<dbReference type="PROSITE" id="PS50222">
    <property type="entry name" value="EF_HAND_2"/>
    <property type="match status" value="4"/>
</dbReference>
<keyword id="KW-0020">Allergen</keyword>
<keyword id="KW-0106">Calcium</keyword>
<keyword id="KW-0479">Metal-binding</keyword>
<keyword id="KW-0677">Repeat</keyword>